<organism>
    <name type="scientific">Reston ebolavirus (strain Reston-89)</name>
    <name type="common">REBOV</name>
    <name type="synonym">Reston Ebola virus</name>
    <dbReference type="NCBI Taxonomy" id="386032"/>
    <lineage>
        <taxon>Viruses</taxon>
        <taxon>Riboviria</taxon>
        <taxon>Orthornavirae</taxon>
        <taxon>Negarnaviricota</taxon>
        <taxon>Haploviricotina</taxon>
        <taxon>Monjiviricetes</taxon>
        <taxon>Mononegavirales</taxon>
        <taxon>Filoviridae</taxon>
        <taxon>Orthoebolavirus</taxon>
        <taxon>Orthoebolavirus restonense</taxon>
        <taxon>Reston ebolavirus</taxon>
    </lineage>
</organism>
<organismHost>
    <name type="scientific">Epomops franqueti</name>
    <name type="common">Franquet's epauletted fruit bat</name>
    <name type="synonym">Epomophorus franqueti</name>
    <dbReference type="NCBI Taxonomy" id="77231"/>
</organismHost>
<organismHost>
    <name type="scientific">Homo sapiens</name>
    <name type="common">Human</name>
    <dbReference type="NCBI Taxonomy" id="9606"/>
</organismHost>
<organismHost>
    <name type="scientific">Myonycteris torquata</name>
    <name type="common">Little collared fruit bat</name>
    <dbReference type="NCBI Taxonomy" id="77243"/>
</organismHost>
<organismHost>
    <name type="scientific">Sus scrofa</name>
    <name type="common">Pig</name>
    <dbReference type="NCBI Taxonomy" id="9823"/>
</organismHost>
<evidence type="ECO:0000250" key="1"/>
<evidence type="ECO:0000250" key="2">
    <source>
        <dbReference type="UniProtKB" id="Q05127"/>
    </source>
</evidence>
<evidence type="ECO:0000250" key="3">
    <source>
        <dbReference type="UniProtKB" id="Q5XX07"/>
    </source>
</evidence>
<evidence type="ECO:0000250" key="4">
    <source>
        <dbReference type="UniProtKB" id="Q6V1Q9"/>
    </source>
</evidence>
<evidence type="ECO:0000255" key="5"/>
<evidence type="ECO:0000255" key="6">
    <source>
        <dbReference type="PROSITE-ProRule" id="PRU01071"/>
    </source>
</evidence>
<evidence type="ECO:0000269" key="7">
    <source>
    </source>
</evidence>
<evidence type="ECO:0000269" key="8">
    <source>
    </source>
</evidence>
<evidence type="ECO:0000269" key="9">
    <source>
    </source>
</evidence>
<evidence type="ECO:0000269" key="10">
    <source>
    </source>
</evidence>
<evidence type="ECO:0007744" key="11">
    <source>
        <dbReference type="PDB" id="3KS4"/>
    </source>
</evidence>
<evidence type="ECO:0007744" key="12">
    <source>
        <dbReference type="PDB" id="3KS8"/>
    </source>
</evidence>
<evidence type="ECO:0007744" key="13">
    <source>
        <dbReference type="PDB" id="3L2A"/>
    </source>
</evidence>
<evidence type="ECO:0007744" key="14">
    <source>
        <dbReference type="PDB" id="4LG2"/>
    </source>
</evidence>
<evidence type="ECO:0007744" key="15">
    <source>
        <dbReference type="PDB" id="6GBQ"/>
    </source>
</evidence>
<evidence type="ECO:0007744" key="16">
    <source>
        <dbReference type="PDB" id="6GBR"/>
    </source>
</evidence>
<evidence type="ECO:0007829" key="17">
    <source>
        <dbReference type="PDB" id="3L2A"/>
    </source>
</evidence>
<evidence type="ECO:0007829" key="18">
    <source>
        <dbReference type="PDB" id="6GBQ"/>
    </source>
</evidence>
<feature type="chain" id="PRO_0000245076" description="Polymerase cofactor VP35">
    <location>
        <begin position="1"/>
        <end position="329"/>
    </location>
</feature>
<feature type="domain" description="VP35 IID" evidence="6 9">
    <location>
        <begin position="204"/>
        <end position="329"/>
    </location>
</feature>
<feature type="region of interest" description="Homooligomerization" evidence="10">
    <location>
        <begin position="83"/>
        <end position="145"/>
    </location>
</feature>
<feature type="coiled-coil region" evidence="5">
    <location>
        <begin position="84"/>
        <end position="112"/>
    </location>
</feature>
<feature type="modified residue" description="Phosphoserine" evidence="2">
    <location>
        <position position="194"/>
    </location>
</feature>
<feature type="modified residue" description="Phosphothreonine" evidence="2">
    <location>
        <position position="195"/>
    </location>
</feature>
<feature type="modified residue" description="Phosphothreonine" evidence="2">
    <location>
        <position position="199"/>
    </location>
</feature>
<feature type="modified residue" description="Phosphoserine" evidence="2">
    <location>
        <position position="306"/>
    </location>
</feature>
<feature type="cross-link" description="Glycyl lysine isopeptide (Lys-Gly) (interchain with G-Cter in ubiquitin)" evidence="2">
    <location>
        <position position="298"/>
    </location>
</feature>
<feature type="helix" evidence="18">
    <location>
        <begin position="73"/>
        <end position="134"/>
    </location>
</feature>
<feature type="helix" evidence="17">
    <location>
        <begin position="210"/>
        <end position="219"/>
    </location>
</feature>
<feature type="strand" evidence="17">
    <location>
        <begin position="223"/>
        <end position="225"/>
    </location>
</feature>
<feature type="helix" evidence="17">
    <location>
        <begin position="227"/>
        <end position="241"/>
    </location>
</feature>
<feature type="helix" evidence="17">
    <location>
        <begin position="245"/>
        <end position="257"/>
    </location>
</feature>
<feature type="helix" evidence="17">
    <location>
        <begin position="262"/>
        <end position="272"/>
    </location>
</feature>
<feature type="helix" evidence="17">
    <location>
        <begin position="275"/>
        <end position="278"/>
    </location>
</feature>
<feature type="strand" evidence="17">
    <location>
        <begin position="283"/>
        <end position="285"/>
    </location>
</feature>
<feature type="helix" evidence="17">
    <location>
        <begin position="289"/>
        <end position="291"/>
    </location>
</feature>
<feature type="helix" evidence="17">
    <location>
        <begin position="294"/>
        <end position="296"/>
    </location>
</feature>
<feature type="strand" evidence="17">
    <location>
        <begin position="299"/>
        <end position="302"/>
    </location>
</feature>
<feature type="helix" evidence="17">
    <location>
        <begin position="309"/>
        <end position="311"/>
    </location>
</feature>
<feature type="strand" evidence="17">
    <location>
        <begin position="313"/>
        <end position="318"/>
    </location>
</feature>
<feature type="strand" evidence="17">
    <location>
        <begin position="324"/>
        <end position="328"/>
    </location>
</feature>
<gene>
    <name type="primary">VP35</name>
    <name type="ORF">REBOVgp2</name>
</gene>
<comment type="function">
    <text evidence="2 3 4 7">Plays an essential role in viral RNA synthesis and also a role in suppressing innate immune signaling. Acts as a polymerase cofactor in the RNA polymerase transcription and replication complexes (By similarity). Serves as nucleoprotein/NP monomer chaperone prior to the formation of the large oligomeric RNA-bound complexes (By similarity). Regulates RNA synthesis by modulating NP-RNA interactions and interacting with DYNLL1. VP35-NP interaction controls the switch between RNA-bound NP and free NP and thus the switch between genome replication and genome packaging into the nucleocapsid. Prevents establishment of cellular antiviral state, thereby suppressing host DC maturation. Acts by inhibiting host RIGI activation both by shielding dsRNA from detection and by preventing PRKRA binding to RIGI. Blocks virus-induced phosphorylation and activation of interferon regulatory factor 3/IRF3, a transcription factor critical for the induction of interferons alpha and beta. This blockage is produced through the interaction with and inhibition of host IKBKE and TBK1, producing a strong inhibition of the phosphorylation and activation of IRF3. Also inhibits the antiviral effect mediated by the host interferon-induced, double-stranded RNA-activated protein kinase EIF2AK2/PKR. Increases PIAS1-mediated SUMOylation of IRF7, thereby repressing interferon transcription (By similarity). Also acts as a suppressor of RNA silencing by interacting with host DICER1, TARBP2/TRBP and PRKRA/PACT (By similarity). As a dimer, binds and sequesters dsRNA contributing to the inhibition of interferon production (PubMed:20018665).</text>
</comment>
<comment type="subunit">
    <text evidence="2 4 7 10">Homodimer (PubMed:20018665). Homooligomer; via the coiled coil domain (PubMed:30482729). Interacts with nucleoprotein NP and polymerase L; VP35 bridges L and NP and allows the formation of the polymerase complex. Also interacts with VP30; this interaction is regulated by VP30 phosphorylation. Interacts with host IKBKE and TBK1; the interactions lead to inhibition of cellular antiviral response by blocking necessary interactions of IKBKE and TBK1 with their substrate IRF3. Interacts with host DYNLL1; this interaction stabilizes VP35 N-terminal oligomerization domain, enhances viral RNA synthesis but does not participate in suppressing the host innate immune response. Interacts with host PRKRA; this interaction inhibits the interaction between RIGI and PRKRA. Interacts with dsRNA. Interacts with host TRIM6; this interaction plays an important role in promoting efficient viral replication. Interacts with host STAU1. Interacts with host IRF7, PIAS1 and UBE2I/UBC9; these interactions mediate the sumoylation of IRF7 and contribute to the inhibition of IFN-type I production (By similarity). Interacts with host DICER1; this interaction prevents TARBP2/TRBP binding to DICER1 and thus allows the virus to counteract host RNA silencing. Interacts with host TARBP2/TRBP and PRKRA/PACT; these interactions prevent TARBP2 and PRKRA binding to DICER1 and thus allows the virus to counteract host RNA silencing (By similarity).</text>
</comment>
<comment type="subcellular location">
    <subcellularLocation>
        <location>Virion</location>
    </subcellularLocation>
    <subcellularLocation>
        <location evidence="1">Host cytoplasm</location>
    </subcellularLocation>
</comment>
<comment type="domain">
    <text evidence="7 8 9">The interferon inhibitory domain (IID) binds dsRNA.</text>
</comment>
<comment type="PTM">
    <text evidence="2">Phosphorylated by host IKBKE. Phosphorylation contributes to efficient viral replication and transcription.</text>
</comment>
<comment type="PTM">
    <text evidence="2">Ubiquitinated by host TRIM6 to facilitate virus replication.</text>
</comment>
<comment type="similarity">
    <text evidence="6">Belongs to the filoviridae polymerase cofactor VP35 family.</text>
</comment>
<accession>Q8JPY0</accession>
<name>VP35_EBORR</name>
<dbReference type="EMBL" id="AF522874">
    <property type="protein sequence ID" value="AAN04449.1"/>
    <property type="molecule type" value="Genomic_RNA"/>
</dbReference>
<dbReference type="EMBL" id="AY769362">
    <property type="protein sequence ID" value="AAV48575.1"/>
    <property type="molecule type" value="Genomic_RNA"/>
</dbReference>
<dbReference type="RefSeq" id="NP_690581.1">
    <property type="nucleotide sequence ID" value="NC_004161.1"/>
</dbReference>
<dbReference type="PDB" id="3KS4">
    <property type="method" value="X-ray"/>
    <property type="resolution" value="2.40 A"/>
    <property type="chains" value="A/B=160-329"/>
</dbReference>
<dbReference type="PDB" id="3KS8">
    <property type="method" value="X-ray"/>
    <property type="resolution" value="2.40 A"/>
    <property type="chains" value="A/B/C/D=160-329"/>
</dbReference>
<dbReference type="PDB" id="3L2A">
    <property type="method" value="X-ray"/>
    <property type="resolution" value="1.71 A"/>
    <property type="chains" value="A=204-329"/>
</dbReference>
<dbReference type="PDB" id="4LG2">
    <property type="method" value="X-ray"/>
    <property type="resolution" value="2.70 A"/>
    <property type="chains" value="A/B/C/D=205-329"/>
</dbReference>
<dbReference type="PDB" id="6GBQ">
    <property type="method" value="X-ray"/>
    <property type="resolution" value="2.43 A"/>
    <property type="chains" value="A/B/C/D/E/F/G/H=71-134"/>
</dbReference>
<dbReference type="PDB" id="6GBR">
    <property type="method" value="X-ray"/>
    <property type="resolution" value="3.15 A"/>
    <property type="chains" value="A/B/C/D=71-134"/>
</dbReference>
<dbReference type="PDBsum" id="3KS4"/>
<dbReference type="PDBsum" id="3KS8"/>
<dbReference type="PDBsum" id="3L2A"/>
<dbReference type="PDBsum" id="4LG2"/>
<dbReference type="PDBsum" id="6GBQ"/>
<dbReference type="PDBsum" id="6GBR"/>
<dbReference type="SMR" id="Q8JPY0"/>
<dbReference type="GeneID" id="955189"/>
<dbReference type="KEGG" id="vg:955189"/>
<dbReference type="EvolutionaryTrace" id="Q8JPY0"/>
<dbReference type="Proteomes" id="UP000007207">
    <property type="component" value="Segment"/>
</dbReference>
<dbReference type="Proteomes" id="UP000138664">
    <property type="component" value="Genome"/>
</dbReference>
<dbReference type="GO" id="GO:0030430">
    <property type="term" value="C:host cell cytoplasm"/>
    <property type="evidence" value="ECO:0007669"/>
    <property type="project" value="UniProtKB-SubCell"/>
</dbReference>
<dbReference type="GO" id="GO:0044423">
    <property type="term" value="C:virion component"/>
    <property type="evidence" value="ECO:0007669"/>
    <property type="project" value="UniProtKB-KW"/>
</dbReference>
<dbReference type="GO" id="GO:0003723">
    <property type="term" value="F:RNA binding"/>
    <property type="evidence" value="ECO:0007669"/>
    <property type="project" value="UniProtKB-KW"/>
</dbReference>
<dbReference type="GO" id="GO:0039724">
    <property type="term" value="P:symbiont-mediated suppression of host cytoplasmic pattern recognition receptor signaling pathway via inhibition of IKBKE activity"/>
    <property type="evidence" value="ECO:0007669"/>
    <property type="project" value="UniProtKB-KW"/>
</dbReference>
<dbReference type="GO" id="GO:0039557">
    <property type="term" value="P:symbiont-mediated suppression of host cytoplasmic pattern recognition receptor signaling pathway via inhibition of IRF7 activity"/>
    <property type="evidence" value="ECO:0007669"/>
    <property type="project" value="UniProtKB-KW"/>
</dbReference>
<dbReference type="GO" id="GO:0039723">
    <property type="term" value="P:symbiont-mediated suppression of host cytoplasmic pattern recognition receptor signaling pathway via inhibition of TBK1 activity"/>
    <property type="evidence" value="ECO:0007669"/>
    <property type="project" value="UniProtKB-KW"/>
</dbReference>
<dbReference type="GO" id="GO:0039722">
    <property type="term" value="P:symbiont-mediated suppression of host toll-like receptor signaling pathway"/>
    <property type="evidence" value="ECO:0007669"/>
    <property type="project" value="UniProtKB-KW"/>
</dbReference>
<dbReference type="CDD" id="cd21030">
    <property type="entry name" value="V35-RBD_P-protein-C_like"/>
    <property type="match status" value="1"/>
</dbReference>
<dbReference type="FunFam" id="1.10.8.950:FF:000001">
    <property type="entry name" value="Polymerase cofactor VP35"/>
    <property type="match status" value="1"/>
</dbReference>
<dbReference type="FunFam" id="2.10.10.70:FF:000001">
    <property type="entry name" value="Polymerase cofactor VP35"/>
    <property type="match status" value="1"/>
</dbReference>
<dbReference type="Gene3D" id="2.10.10.70">
    <property type="entry name" value="Filoviridae VP35, C-terminal inhibitory domain, beta-sheet subdomain"/>
    <property type="match status" value="1"/>
</dbReference>
<dbReference type="Gene3D" id="1.10.8.950">
    <property type="entry name" value="Filoviridae VP35, C-terminal inhibitory domain, helical subdomain"/>
    <property type="match status" value="1"/>
</dbReference>
<dbReference type="InterPro" id="IPR002953">
    <property type="entry name" value="Filo_VP35"/>
</dbReference>
<dbReference type="InterPro" id="IPR031163">
    <property type="entry name" value="VP35_IID"/>
</dbReference>
<dbReference type="InterPro" id="IPR043061">
    <property type="entry name" value="VP35_IID_b-sht"/>
</dbReference>
<dbReference type="InterPro" id="IPR043060">
    <property type="entry name" value="VP35_IID_hlx"/>
</dbReference>
<dbReference type="Pfam" id="PF02097">
    <property type="entry name" value="Filo_VP35"/>
    <property type="match status" value="1"/>
</dbReference>
<dbReference type="PIRSF" id="PIRSF018326">
    <property type="entry name" value="VP35_FiloV"/>
    <property type="match status" value="1"/>
</dbReference>
<dbReference type="PRINTS" id="PR01240">
    <property type="entry name" value="FILOVP35"/>
</dbReference>
<dbReference type="PROSITE" id="PS51735">
    <property type="entry name" value="VP35_IID"/>
    <property type="match status" value="1"/>
</dbReference>
<protein>
    <recommendedName>
        <fullName>Polymerase cofactor VP35</fullName>
    </recommendedName>
</protein>
<proteinExistence type="evidence at protein level"/>
<reference key="1">
    <citation type="journal article" date="2002" name="Virus Res.">
        <title>Molecular characterization of an isolate from the 1989/90 epizootic of Ebola virus Reston among macaques imported into the United States.</title>
        <authorList>
            <person name="Groseth A."/>
            <person name="Stroeher U."/>
            <person name="Theriault S."/>
            <person name="Feldmann H."/>
        </authorList>
    </citation>
    <scope>NUCLEOTIDE SEQUENCE [GENOMIC RNA]</scope>
</reference>
<reference key="2">
    <citation type="journal article" date="2005" name="Virology">
        <title>A reconstituted replication and transcription system for Ebola virus Reston and comparison with Ebola virus Zaire.</title>
        <authorList>
            <person name="Boehmann Y."/>
            <person name="Enterlein S."/>
            <person name="Randolf A."/>
            <person name="Muehlberger E.I."/>
        </authorList>
    </citation>
    <scope>NUCLEOTIDE SEQUENCE [GENOMIC RNA]</scope>
    <source>
        <strain>Isolate Pennsylvania-89</strain>
    </source>
</reference>
<reference evidence="13" key="3">
    <citation type="journal article" date="2010" name="J. Mol. Biol.">
        <title>Structural and functional characterization of Reston Ebola virus VP35 interferon inhibitory domain.</title>
        <authorList>
            <person name="Leung D.W."/>
            <person name="Shabman R.S."/>
            <person name="Farahbakhsh M."/>
            <person name="Prins K.C."/>
            <person name="Borek D.M."/>
            <person name="Wang T."/>
            <person name="Muhlberger E."/>
            <person name="Basler C.F."/>
            <person name="Amarasinghe G.K."/>
        </authorList>
    </citation>
    <scope>X-RAY CRYSTALLOGRAPHY (1.71 ANGSTROMS) OF 204-329</scope>
    <scope>DOMAIN</scope>
</reference>
<reference evidence="11 12" key="4">
    <citation type="journal article" date="2010" name="Proc. Natl. Acad. Sci. U.S.A.">
        <title>Ebolavirus VP35 uses a bimodal strategy to bind dsRNA for innate immune suppression.</title>
        <authorList>
            <person name="Kimberlin C.R."/>
            <person name="Bornholdt Z.A."/>
            <person name="Li S."/>
            <person name="Woods V.L. Jr."/>
            <person name="MacRae I.J."/>
            <person name="Saphire E.O."/>
        </authorList>
    </citation>
    <scope>X-RAY CRYSTALLOGRAPHY (2.40 ANGSTROMS) OF 160-329</scope>
    <scope>SUBUNIT</scope>
    <scope>FUNCTION</scope>
    <scope>RNA-BINDING</scope>
    <scope>DOMAIN</scope>
</reference>
<reference evidence="14" key="5">
    <citation type="journal article" date="2013" name="J. Virol.">
        <title>Ebolavirus VP35 coats the backbone of double-stranded RNA for interferon antagonism.</title>
        <authorList>
            <person name="Bale S."/>
            <person name="Julien J.P."/>
            <person name="Bornholdt Z.A."/>
            <person name="Krois A.S."/>
            <person name="Wilson I.A."/>
            <person name="Saphire E.O."/>
        </authorList>
    </citation>
    <scope>X-RAY CRYSTALLOGRAPHY (2.70 ANGSTROMS) OF 205-329</scope>
    <scope>RNA-BINDING</scope>
    <scope>DOMAIN</scope>
</reference>
<reference evidence="15 16" key="6">
    <citation type="journal article" date="2019" name="Structure">
        <title>Structures of Ebola and Reston Virus VP35 Oligomerization Domains and Comparative Biophysical Characterization in All Ebolavirus Species.</title>
        <authorList>
            <person name="Zinzula L."/>
            <person name="Nagy I."/>
            <person name="Orsini M."/>
            <person name="Weyher-Stingl E."/>
            <person name="Bracher A."/>
            <person name="Baumeister W."/>
        </authorList>
    </citation>
    <scope>X-RAY CRYSTALLOGRAPHY (2.43 ANGSTROMS) OF 71-134</scope>
    <scope>SUBUNIT</scope>
</reference>
<keyword id="KW-0002">3D-structure</keyword>
<keyword id="KW-0175">Coiled coil</keyword>
<keyword id="KW-1035">Host cytoplasm</keyword>
<keyword id="KW-0945">Host-virus interaction</keyword>
<keyword id="KW-1224">Inhibition of host IKBKE by virus</keyword>
<keyword id="KW-1090">Inhibition of host innate immune response by virus</keyword>
<keyword id="KW-1093">Inhibition of host IRF7 by virus</keyword>
<keyword id="KW-1113">Inhibition of host RLR pathway by virus</keyword>
<keyword id="KW-1223">Inhibition of host TBK1 by virus</keyword>
<keyword id="KW-1225">Inhibition of host TLR pathway by virus</keyword>
<keyword id="KW-0922">Interferon antiviral system evasion</keyword>
<keyword id="KW-1017">Isopeptide bond</keyword>
<keyword id="KW-0597">Phosphoprotein</keyword>
<keyword id="KW-0694">RNA-binding</keyword>
<keyword id="KW-0941">Suppressor of RNA silencing</keyword>
<keyword id="KW-0804">Transcription</keyword>
<keyword id="KW-0832">Ubl conjugation</keyword>
<keyword id="KW-0899">Viral immunoevasion</keyword>
<keyword id="KW-0693">Viral RNA replication</keyword>
<keyword id="KW-0946">Virion</keyword>
<sequence>MYNNKLKVCSGPETTGWISEQLMTGKIPVTDIFIDIDNKPDQMEVRLKPSSRSSTRTCTSSSQTEVNYVPLLKKVEDTLTMLVNATSRQNAAIEALENRLSTLESSLKPIQDMGKVISSLNRSCAEMVAKYDLLVMTTGRATSTAAAVDAYWKEHKQPPPGPALYEENALKGKIDDPNSYVPDAVQEAYKNLDSTSTLTEENFGKPYISAKDLKEIMYDHLPGFGTAFHQLVQVICKIGKDNNLLDTIHAEFQASLADGDSPQCALIQITKRVPIFQDVPPPIIHIRSRGDIPRACQKSLRPAPPSPKIDRGWVCLFKMQDGKTLGLKI</sequence>